<organism>
    <name type="scientific">Arabidopsis thaliana</name>
    <name type="common">Mouse-ear cress</name>
    <dbReference type="NCBI Taxonomy" id="3702"/>
    <lineage>
        <taxon>Eukaryota</taxon>
        <taxon>Viridiplantae</taxon>
        <taxon>Streptophyta</taxon>
        <taxon>Embryophyta</taxon>
        <taxon>Tracheophyta</taxon>
        <taxon>Spermatophyta</taxon>
        <taxon>Magnoliopsida</taxon>
        <taxon>eudicotyledons</taxon>
        <taxon>Gunneridae</taxon>
        <taxon>Pentapetalae</taxon>
        <taxon>rosids</taxon>
        <taxon>malvids</taxon>
        <taxon>Brassicales</taxon>
        <taxon>Brassicaceae</taxon>
        <taxon>Camelineae</taxon>
        <taxon>Arabidopsis</taxon>
    </lineage>
</organism>
<keyword id="KW-0408">Iron</keyword>
<keyword id="KW-0479">Metal-binding</keyword>
<keyword id="KW-0560">Oxidoreductase</keyword>
<keyword id="KW-1185">Reference proteome</keyword>
<dbReference type="EC" id="1.14.-.-"/>
<dbReference type="EMBL" id="AB025604">
    <property type="protein sequence ID" value="BAA97487.1"/>
    <property type="molecule type" value="Genomic_DNA"/>
</dbReference>
<dbReference type="EMBL" id="CP002688">
    <property type="protein sequence ID" value="AED97201.1"/>
    <property type="molecule type" value="Genomic_DNA"/>
</dbReference>
<dbReference type="EMBL" id="BT010539">
    <property type="protein sequence ID" value="AAQ65162.1"/>
    <property type="molecule type" value="mRNA"/>
</dbReference>
<dbReference type="EMBL" id="AK176452">
    <property type="protein sequence ID" value="BAD44215.1"/>
    <property type="molecule type" value="mRNA"/>
</dbReference>
<dbReference type="RefSeq" id="NP_200761.1">
    <property type="nucleotide sequence ID" value="NM_125345.5"/>
</dbReference>
<dbReference type="SMR" id="Q9LTH8"/>
<dbReference type="FunCoup" id="Q9LTH8">
    <property type="interactions" value="12"/>
</dbReference>
<dbReference type="STRING" id="3702.Q9LTH8"/>
<dbReference type="GlyGen" id="Q9LTH8">
    <property type="glycosylation" value="1 site"/>
</dbReference>
<dbReference type="PaxDb" id="3702-AT5G59530.1"/>
<dbReference type="ProteomicsDB" id="243276"/>
<dbReference type="EnsemblPlants" id="AT5G59530.1">
    <property type="protein sequence ID" value="AT5G59530.1"/>
    <property type="gene ID" value="AT5G59530"/>
</dbReference>
<dbReference type="GeneID" id="836072"/>
<dbReference type="Gramene" id="AT5G59530.1">
    <property type="protein sequence ID" value="AT5G59530.1"/>
    <property type="gene ID" value="AT5G59530"/>
</dbReference>
<dbReference type="KEGG" id="ath:AT5G59530"/>
<dbReference type="Araport" id="AT5G59530"/>
<dbReference type="TAIR" id="AT5G59530"/>
<dbReference type="eggNOG" id="KOG0143">
    <property type="taxonomic scope" value="Eukaryota"/>
</dbReference>
<dbReference type="HOGENOM" id="CLU_010119_0_0_1"/>
<dbReference type="InParanoid" id="Q9LTH8"/>
<dbReference type="OMA" id="VANCVGP"/>
<dbReference type="PhylomeDB" id="Q9LTH8"/>
<dbReference type="BioCyc" id="ARA:AT5G59530-MONOMER"/>
<dbReference type="PRO" id="PR:Q9LTH8"/>
<dbReference type="Proteomes" id="UP000006548">
    <property type="component" value="Chromosome 5"/>
</dbReference>
<dbReference type="ExpressionAtlas" id="Q9LTH8">
    <property type="expression patterns" value="baseline and differential"/>
</dbReference>
<dbReference type="GO" id="GO:0051213">
    <property type="term" value="F:dioxygenase activity"/>
    <property type="evidence" value="ECO:0007669"/>
    <property type="project" value="UniProtKB-ARBA"/>
</dbReference>
<dbReference type="GO" id="GO:0046872">
    <property type="term" value="F:metal ion binding"/>
    <property type="evidence" value="ECO:0007669"/>
    <property type="project" value="UniProtKB-KW"/>
</dbReference>
<dbReference type="GO" id="GO:0009058">
    <property type="term" value="P:biosynthetic process"/>
    <property type="evidence" value="ECO:0007669"/>
    <property type="project" value="UniProtKB-ARBA"/>
</dbReference>
<dbReference type="FunFam" id="2.60.120.330:FF:000005">
    <property type="entry name" value="1-aminocyclopropane-1-carboxylate oxidase homolog 1"/>
    <property type="match status" value="1"/>
</dbReference>
<dbReference type="Gene3D" id="2.60.120.330">
    <property type="entry name" value="B-lactam Antibiotic, Isopenicillin N Synthase, Chain"/>
    <property type="match status" value="1"/>
</dbReference>
<dbReference type="InterPro" id="IPR026992">
    <property type="entry name" value="DIOX_N"/>
</dbReference>
<dbReference type="InterPro" id="IPR044861">
    <property type="entry name" value="IPNS-like_FE2OG_OXY"/>
</dbReference>
<dbReference type="InterPro" id="IPR027443">
    <property type="entry name" value="IPNS-like_sf"/>
</dbReference>
<dbReference type="InterPro" id="IPR005123">
    <property type="entry name" value="Oxoglu/Fe-dep_dioxygenase_dom"/>
</dbReference>
<dbReference type="PANTHER" id="PTHR10209:SF714">
    <property type="entry name" value="1-AMINOCYCLOPROPANE-1-CARBOXYLATE OXIDASE HOMOLOG 11-RELATED"/>
    <property type="match status" value="1"/>
</dbReference>
<dbReference type="PANTHER" id="PTHR10209">
    <property type="entry name" value="OXIDOREDUCTASE, 2OG-FE II OXYGENASE FAMILY PROTEIN"/>
    <property type="match status" value="1"/>
</dbReference>
<dbReference type="Pfam" id="PF03171">
    <property type="entry name" value="2OG-FeII_Oxy"/>
    <property type="match status" value="1"/>
</dbReference>
<dbReference type="Pfam" id="PF14226">
    <property type="entry name" value="DIOX_N"/>
    <property type="match status" value="1"/>
</dbReference>
<dbReference type="SUPFAM" id="SSF51197">
    <property type="entry name" value="Clavaminate synthase-like"/>
    <property type="match status" value="1"/>
</dbReference>
<dbReference type="PROSITE" id="PS51471">
    <property type="entry name" value="FE2OG_OXY"/>
    <property type="match status" value="1"/>
</dbReference>
<evidence type="ECO:0000255" key="1">
    <source>
        <dbReference type="PROSITE-ProRule" id="PRU00805"/>
    </source>
</evidence>
<evidence type="ECO:0000305" key="2"/>
<sequence length="364" mass="41275">MAKNSVEFDRYIERKAFDNTKEGVKGLIDAKITEIPRIFHVPQDTLPDKKRSVSDLEIPTIDFASVNVDTPSREAIVEKVKYAVENWGFFQVINHGVPLNVLEEIKDGVRRFHEEEDPEVKKSYYSLDFTKNKFAYSSNFDLYSSSPSLTWRDSISCYMAPDPPTPEELPETCRDAMIEYSKHVLSLGDLLFELLSEALGLKSEILKSMDCLKSLLMICHYYPPCPQPDLTLGISKHSDNSFLTVLLQDNIGGLQILHQDSWVDVSPLPGALVVNVGDFLQLITNDKFISVEHRVLANTRGPRISVASFFSSSIRENSTVYGPMKELVSEENPPKYRDTTLREYSEGYFKKGLDGTSHLSNFRI</sequence>
<gene>
    <name type="ordered locus">At5g59530</name>
    <name type="ORF">F2O15.26</name>
</gene>
<protein>
    <recommendedName>
        <fullName>1-aminocyclopropane-1-carboxylate oxidase homolog 11</fullName>
        <ecNumber>1.14.-.-</ecNumber>
    </recommendedName>
</protein>
<name>ACH11_ARATH</name>
<reference key="1">
    <citation type="submission" date="2005-04" db="EMBL/GenBank/DDBJ databases">
        <title>Structural analysis of Arabidopsis thaliana chromosome 5. XI.</title>
        <authorList>
            <person name="Kaneko T."/>
            <person name="Katoh T."/>
            <person name="Asamizu E."/>
            <person name="Sato S."/>
            <person name="Nakamura Y."/>
            <person name="Kotani H."/>
            <person name="Tabata S."/>
        </authorList>
    </citation>
    <scope>NUCLEOTIDE SEQUENCE [LARGE SCALE GENOMIC DNA]</scope>
    <source>
        <strain>cv. Columbia</strain>
    </source>
</reference>
<reference key="2">
    <citation type="journal article" date="2017" name="Plant J.">
        <title>Araport11: a complete reannotation of the Arabidopsis thaliana reference genome.</title>
        <authorList>
            <person name="Cheng C.Y."/>
            <person name="Krishnakumar V."/>
            <person name="Chan A.P."/>
            <person name="Thibaud-Nissen F."/>
            <person name="Schobel S."/>
            <person name="Town C.D."/>
        </authorList>
    </citation>
    <scope>GENOME REANNOTATION</scope>
    <source>
        <strain>cv. Columbia</strain>
    </source>
</reference>
<reference key="3">
    <citation type="journal article" date="2003" name="Science">
        <title>Empirical analysis of transcriptional activity in the Arabidopsis genome.</title>
        <authorList>
            <person name="Yamada K."/>
            <person name="Lim J."/>
            <person name="Dale J.M."/>
            <person name="Chen H."/>
            <person name="Shinn P."/>
            <person name="Palm C.J."/>
            <person name="Southwick A.M."/>
            <person name="Wu H.C."/>
            <person name="Kim C.J."/>
            <person name="Nguyen M."/>
            <person name="Pham P.K."/>
            <person name="Cheuk R.F."/>
            <person name="Karlin-Newmann G."/>
            <person name="Liu S.X."/>
            <person name="Lam B."/>
            <person name="Sakano H."/>
            <person name="Wu T."/>
            <person name="Yu G."/>
            <person name="Miranda M."/>
            <person name="Quach H.L."/>
            <person name="Tripp M."/>
            <person name="Chang C.H."/>
            <person name="Lee J.M."/>
            <person name="Toriumi M.J."/>
            <person name="Chan M.M."/>
            <person name="Tang C.C."/>
            <person name="Onodera C.S."/>
            <person name="Deng J.M."/>
            <person name="Akiyama K."/>
            <person name="Ansari Y."/>
            <person name="Arakawa T."/>
            <person name="Banh J."/>
            <person name="Banno F."/>
            <person name="Bowser L."/>
            <person name="Brooks S.Y."/>
            <person name="Carninci P."/>
            <person name="Chao Q."/>
            <person name="Choy N."/>
            <person name="Enju A."/>
            <person name="Goldsmith A.D."/>
            <person name="Gurjal M."/>
            <person name="Hansen N.F."/>
            <person name="Hayashizaki Y."/>
            <person name="Johnson-Hopson C."/>
            <person name="Hsuan V.W."/>
            <person name="Iida K."/>
            <person name="Karnes M."/>
            <person name="Khan S."/>
            <person name="Koesema E."/>
            <person name="Ishida J."/>
            <person name="Jiang P.X."/>
            <person name="Jones T."/>
            <person name="Kawai J."/>
            <person name="Kamiya A."/>
            <person name="Meyers C."/>
            <person name="Nakajima M."/>
            <person name="Narusaka M."/>
            <person name="Seki M."/>
            <person name="Sakurai T."/>
            <person name="Satou M."/>
            <person name="Tamse R."/>
            <person name="Vaysberg M."/>
            <person name="Wallender E.K."/>
            <person name="Wong C."/>
            <person name="Yamamura Y."/>
            <person name="Yuan S."/>
            <person name="Shinozaki K."/>
            <person name="Davis R.W."/>
            <person name="Theologis A."/>
            <person name="Ecker J.R."/>
        </authorList>
    </citation>
    <scope>NUCLEOTIDE SEQUENCE [LARGE SCALE MRNA]</scope>
    <source>
        <strain>cv. Columbia</strain>
    </source>
</reference>
<reference key="4">
    <citation type="submission" date="2004-09" db="EMBL/GenBank/DDBJ databases">
        <title>Large-scale analysis of RIKEN Arabidopsis full-length (RAFL) cDNAs.</title>
        <authorList>
            <person name="Totoki Y."/>
            <person name="Seki M."/>
            <person name="Ishida J."/>
            <person name="Nakajima M."/>
            <person name="Enju A."/>
            <person name="Kamiya A."/>
            <person name="Narusaka M."/>
            <person name="Shin-i T."/>
            <person name="Nakagawa M."/>
            <person name="Sakamoto N."/>
            <person name="Oishi K."/>
            <person name="Kohara Y."/>
            <person name="Kobayashi M."/>
            <person name="Toyoda A."/>
            <person name="Sakaki Y."/>
            <person name="Sakurai T."/>
            <person name="Iida K."/>
            <person name="Akiyama K."/>
            <person name="Satou M."/>
            <person name="Toyoda T."/>
            <person name="Konagaya A."/>
            <person name="Carninci P."/>
            <person name="Kawai J."/>
            <person name="Hayashizaki Y."/>
            <person name="Shinozaki K."/>
        </authorList>
    </citation>
    <scope>NUCLEOTIDE SEQUENCE [LARGE SCALE MRNA]</scope>
    <source>
        <strain>cv. Columbia</strain>
    </source>
</reference>
<proteinExistence type="evidence at transcript level"/>
<feature type="chain" id="PRO_0000408286" description="1-aminocyclopropane-1-carboxylate oxidase homolog 11">
    <location>
        <begin position="1"/>
        <end position="364"/>
    </location>
</feature>
<feature type="domain" description="Fe2OG dioxygenase" evidence="1">
    <location>
        <begin position="213"/>
        <end position="312"/>
    </location>
</feature>
<feature type="binding site" evidence="1">
    <location>
        <position position="237"/>
    </location>
    <ligand>
        <name>Fe cation</name>
        <dbReference type="ChEBI" id="CHEBI:24875"/>
    </ligand>
</feature>
<feature type="binding site" evidence="1">
    <location>
        <position position="239"/>
    </location>
    <ligand>
        <name>Fe cation</name>
        <dbReference type="ChEBI" id="CHEBI:24875"/>
    </ligand>
</feature>
<feature type="binding site" evidence="1">
    <location>
        <position position="293"/>
    </location>
    <ligand>
        <name>Fe cation</name>
        <dbReference type="ChEBI" id="CHEBI:24875"/>
    </ligand>
</feature>
<feature type="binding site" evidence="1">
    <location>
        <position position="303"/>
    </location>
    <ligand>
        <name>2-oxoglutarate</name>
        <dbReference type="ChEBI" id="CHEBI:16810"/>
    </ligand>
</feature>
<accession>Q9LTH8</accession>
<comment type="cofactor">
    <cofactor evidence="1">
        <name>Fe(2+)</name>
        <dbReference type="ChEBI" id="CHEBI:29033"/>
    </cofactor>
    <text evidence="1">Binds 1 Fe(2+) ion per subunit.</text>
</comment>
<comment type="similarity">
    <text evidence="2">Belongs to the iron/ascorbate-dependent oxidoreductase family.</text>
</comment>